<feature type="chain" id="PRO_0000222485" description="Putative non-structural protein NS3">
    <location>
        <begin position="1"/>
        <end position="186"/>
    </location>
</feature>
<accession>Q90056</accession>
<name>VNS3_JDNVP</name>
<protein>
    <recommendedName>
        <fullName>Putative non-structural protein NS3</fullName>
    </recommendedName>
    <alternativeName>
        <fullName>ORF4</fullName>
    </alternativeName>
</protein>
<reference key="1">
    <citation type="journal article" date="1992" name="Virology">
        <title>Complete nucleotide sequence of the cloned infectious genome of Junonia coenia densovirus reveals an organization unique among parvoviruses.</title>
        <authorList>
            <person name="Dumas B."/>
            <person name="Jourdan M."/>
            <person name="Pascaud A.M."/>
            <person name="Bergoin M."/>
        </authorList>
    </citation>
    <scope>NUCLEOTIDE SEQUENCE [GENOMIC DNA]</scope>
</reference>
<gene>
    <name type="primary">NS3</name>
</gene>
<dbReference type="EMBL" id="S47266">
    <property type="protein sequence ID" value="AAB23701.1"/>
    <property type="molecule type" value="Genomic_DNA"/>
</dbReference>
<dbReference type="PIR" id="D44054">
    <property type="entry name" value="D44054"/>
</dbReference>
<dbReference type="KEGG" id="vg:955414"/>
<dbReference type="Proteomes" id="UP000008294">
    <property type="component" value="Segment"/>
</dbReference>
<dbReference type="InterPro" id="IPR035222">
    <property type="entry name" value="NS3"/>
</dbReference>
<dbReference type="Pfam" id="PF17530">
    <property type="entry name" value="NS3"/>
    <property type="match status" value="1"/>
</dbReference>
<keyword id="KW-1185">Reference proteome</keyword>
<sequence length="186" mass="22541">MQHDLDNQIIACGEDIDHTLAMEELEHWDWTKQNRLPFQLYLAVMHLNEIPEWLDETMLIECVYYFKELINHRDPYDTDEFNAWNMNGKPFKTMWKICKFCYTNCEDPDEYRFMYNRTVFVEDAEDIINRLQDGSSWCQICHTCPLFNISVIYENSPNKKRRYSSSSEEDEYMSNSFYVKHPNSRH</sequence>
<organismHost>
    <name type="scientific">Lepidoptera</name>
    <name type="common">butterflies and moths</name>
    <dbReference type="NCBI Taxonomy" id="7088"/>
</organismHost>
<organism>
    <name type="scientific">Junonia coenia densovirus (isolate pBRJ/1990)</name>
    <name type="common">JcDNV</name>
    <dbReference type="NCBI Taxonomy" id="648250"/>
    <lineage>
        <taxon>Viruses</taxon>
        <taxon>Monodnaviria</taxon>
        <taxon>Shotokuvirae</taxon>
        <taxon>Cossaviricota</taxon>
        <taxon>Quintoviricetes</taxon>
        <taxon>Piccovirales</taxon>
        <taxon>Parvoviridae</taxon>
        <taxon>Densovirinae</taxon>
        <taxon>Ambidensovirus</taxon>
        <taxon>Lepidopteran ambidensovirus 1</taxon>
    </lineage>
</organism>
<proteinExistence type="predicted"/>